<feature type="chain" id="PRO_0000254539" description="Putative uncharacterized protein FLJ36925">
    <location>
        <begin position="1"/>
        <end position="120"/>
    </location>
</feature>
<feature type="region of interest" description="Disordered" evidence="1">
    <location>
        <begin position="90"/>
        <end position="120"/>
    </location>
</feature>
<evidence type="ECO:0000256" key="1">
    <source>
        <dbReference type="SAM" id="MobiDB-lite"/>
    </source>
</evidence>
<evidence type="ECO:0000305" key="2"/>
<name>YV006_HUMAN</name>
<comment type="caution">
    <text evidence="2">Product of a dubious CDS prediction.</text>
</comment>
<dbReference type="EMBL" id="AK094244">
    <property type="status" value="NOT_ANNOTATED_CDS"/>
    <property type="molecule type" value="mRNA"/>
</dbReference>
<dbReference type="GlyGen" id="Q8N9L7">
    <property type="glycosylation" value="1 site, 1 O-linked glycan (1 site)"/>
</dbReference>
<dbReference type="BioMuta" id="-"/>
<dbReference type="neXtProt" id="NX_Q8N9L7"/>
<dbReference type="InParanoid" id="Q8N9L7"/>
<dbReference type="PAN-GO" id="Q8N9L7">
    <property type="GO annotations" value="0 GO annotations based on evolutionary models"/>
</dbReference>
<dbReference type="Pharos" id="Q8N9L7">
    <property type="development level" value="Tdark"/>
</dbReference>
<dbReference type="Proteomes" id="UP000005640">
    <property type="component" value="Unplaced"/>
</dbReference>
<dbReference type="RNAct" id="Q8N9L7">
    <property type="molecule type" value="protein"/>
</dbReference>
<protein>
    <recommendedName>
        <fullName>Putative uncharacterized protein FLJ36925</fullName>
    </recommendedName>
</protein>
<accession>Q8N9L7</accession>
<reference key="1">
    <citation type="journal article" date="2004" name="Nat. Genet.">
        <title>Complete sequencing and characterization of 21,243 full-length human cDNAs.</title>
        <authorList>
            <person name="Ota T."/>
            <person name="Suzuki Y."/>
            <person name="Nishikawa T."/>
            <person name="Otsuki T."/>
            <person name="Sugiyama T."/>
            <person name="Irie R."/>
            <person name="Wakamatsu A."/>
            <person name="Hayashi K."/>
            <person name="Sato H."/>
            <person name="Nagai K."/>
            <person name="Kimura K."/>
            <person name="Makita H."/>
            <person name="Sekine M."/>
            <person name="Obayashi M."/>
            <person name="Nishi T."/>
            <person name="Shibahara T."/>
            <person name="Tanaka T."/>
            <person name="Ishii S."/>
            <person name="Yamamoto J."/>
            <person name="Saito K."/>
            <person name="Kawai Y."/>
            <person name="Isono Y."/>
            <person name="Nakamura Y."/>
            <person name="Nagahari K."/>
            <person name="Murakami K."/>
            <person name="Yasuda T."/>
            <person name="Iwayanagi T."/>
            <person name="Wagatsuma M."/>
            <person name="Shiratori A."/>
            <person name="Sudo H."/>
            <person name="Hosoiri T."/>
            <person name="Kaku Y."/>
            <person name="Kodaira H."/>
            <person name="Kondo H."/>
            <person name="Sugawara M."/>
            <person name="Takahashi M."/>
            <person name="Kanda K."/>
            <person name="Yokoi T."/>
            <person name="Furuya T."/>
            <person name="Kikkawa E."/>
            <person name="Omura Y."/>
            <person name="Abe K."/>
            <person name="Kamihara K."/>
            <person name="Katsuta N."/>
            <person name="Sato K."/>
            <person name="Tanikawa M."/>
            <person name="Yamazaki M."/>
            <person name="Ninomiya K."/>
            <person name="Ishibashi T."/>
            <person name="Yamashita H."/>
            <person name="Murakawa K."/>
            <person name="Fujimori K."/>
            <person name="Tanai H."/>
            <person name="Kimata M."/>
            <person name="Watanabe M."/>
            <person name="Hiraoka S."/>
            <person name="Chiba Y."/>
            <person name="Ishida S."/>
            <person name="Ono Y."/>
            <person name="Takiguchi S."/>
            <person name="Watanabe S."/>
            <person name="Yosida M."/>
            <person name="Hotuta T."/>
            <person name="Kusano J."/>
            <person name="Kanehori K."/>
            <person name="Takahashi-Fujii A."/>
            <person name="Hara H."/>
            <person name="Tanase T.-O."/>
            <person name="Nomura Y."/>
            <person name="Togiya S."/>
            <person name="Komai F."/>
            <person name="Hara R."/>
            <person name="Takeuchi K."/>
            <person name="Arita M."/>
            <person name="Imose N."/>
            <person name="Musashino K."/>
            <person name="Yuuki H."/>
            <person name="Oshima A."/>
            <person name="Sasaki N."/>
            <person name="Aotsuka S."/>
            <person name="Yoshikawa Y."/>
            <person name="Matsunawa H."/>
            <person name="Ichihara T."/>
            <person name="Shiohata N."/>
            <person name="Sano S."/>
            <person name="Moriya S."/>
            <person name="Momiyama H."/>
            <person name="Satoh N."/>
            <person name="Takami S."/>
            <person name="Terashima Y."/>
            <person name="Suzuki O."/>
            <person name="Nakagawa S."/>
            <person name="Senoh A."/>
            <person name="Mizoguchi H."/>
            <person name="Goto Y."/>
            <person name="Shimizu F."/>
            <person name="Wakebe H."/>
            <person name="Hishigaki H."/>
            <person name="Watanabe T."/>
            <person name="Sugiyama A."/>
            <person name="Takemoto M."/>
            <person name="Kawakami B."/>
            <person name="Yamazaki M."/>
            <person name="Watanabe K."/>
            <person name="Kumagai A."/>
            <person name="Itakura S."/>
            <person name="Fukuzumi Y."/>
            <person name="Fujimori Y."/>
            <person name="Komiyama M."/>
            <person name="Tashiro H."/>
            <person name="Tanigami A."/>
            <person name="Fujiwara T."/>
            <person name="Ono T."/>
            <person name="Yamada K."/>
            <person name="Fujii Y."/>
            <person name="Ozaki K."/>
            <person name="Hirao M."/>
            <person name="Ohmori Y."/>
            <person name="Kawabata A."/>
            <person name="Hikiji T."/>
            <person name="Kobatake N."/>
            <person name="Inagaki H."/>
            <person name="Ikema Y."/>
            <person name="Okamoto S."/>
            <person name="Okitani R."/>
            <person name="Kawakami T."/>
            <person name="Noguchi S."/>
            <person name="Itoh T."/>
            <person name="Shigeta K."/>
            <person name="Senba T."/>
            <person name="Matsumura K."/>
            <person name="Nakajima Y."/>
            <person name="Mizuno T."/>
            <person name="Morinaga M."/>
            <person name="Sasaki M."/>
            <person name="Togashi T."/>
            <person name="Oyama M."/>
            <person name="Hata H."/>
            <person name="Watanabe M."/>
            <person name="Komatsu T."/>
            <person name="Mizushima-Sugano J."/>
            <person name="Satoh T."/>
            <person name="Shirai Y."/>
            <person name="Takahashi Y."/>
            <person name="Nakagawa K."/>
            <person name="Okumura K."/>
            <person name="Nagase T."/>
            <person name="Nomura N."/>
            <person name="Kikuchi H."/>
            <person name="Masuho Y."/>
            <person name="Yamashita R."/>
            <person name="Nakai K."/>
            <person name="Yada T."/>
            <person name="Nakamura Y."/>
            <person name="Ohara O."/>
            <person name="Isogai T."/>
            <person name="Sugano S."/>
        </authorList>
    </citation>
    <scope>NUCLEOTIDE SEQUENCE [LARGE SCALE MRNA]</scope>
    <source>
        <tissue>Cerebellum</tissue>
    </source>
</reference>
<sequence length="120" mass="13535">MTMTMSYKAIEKIPRCSWNREEPGEQWNKIYSVETGLLGTYSFEWQSQVANKTMRKRNTNSICGRQHEPHCPVSITRAIAQPQLLTFPDSLASRGGHMTQSGQCHVSGSLLGRGHKSRGR</sequence>
<organism>
    <name type="scientific">Homo sapiens</name>
    <name type="common">Human</name>
    <dbReference type="NCBI Taxonomy" id="9606"/>
    <lineage>
        <taxon>Eukaryota</taxon>
        <taxon>Metazoa</taxon>
        <taxon>Chordata</taxon>
        <taxon>Craniata</taxon>
        <taxon>Vertebrata</taxon>
        <taxon>Euteleostomi</taxon>
        <taxon>Mammalia</taxon>
        <taxon>Eutheria</taxon>
        <taxon>Euarchontoglires</taxon>
        <taxon>Primates</taxon>
        <taxon>Haplorrhini</taxon>
        <taxon>Catarrhini</taxon>
        <taxon>Hominidae</taxon>
        <taxon>Homo</taxon>
    </lineage>
</organism>
<keyword id="KW-1185">Reference proteome</keyword>
<proteinExistence type="uncertain"/>